<keyword id="KW-0025">Alternative splicing</keyword>
<keyword id="KW-0067">ATP-binding</keyword>
<keyword id="KW-0418">Kinase</keyword>
<keyword id="KW-0547">Nucleotide-binding</keyword>
<keyword id="KW-0539">Nucleus</keyword>
<keyword id="KW-1267">Proteomics identification</keyword>
<keyword id="KW-1185">Reference proteome</keyword>
<keyword id="KW-0694">RNA-binding</keyword>
<keyword id="KW-0723">Serine/threonine-protein kinase</keyword>
<keyword id="KW-0808">Transferase</keyword>
<organism evidence="11">
    <name type="scientific">Homo sapiens</name>
    <name type="common">Human</name>
    <dbReference type="NCBI Taxonomy" id="9606"/>
    <lineage>
        <taxon>Eukaryota</taxon>
        <taxon>Metazoa</taxon>
        <taxon>Chordata</taxon>
        <taxon>Craniata</taxon>
        <taxon>Vertebrata</taxon>
        <taxon>Euteleostomi</taxon>
        <taxon>Mammalia</taxon>
        <taxon>Eutheria</taxon>
        <taxon>Euarchontoglires</taxon>
        <taxon>Primates</taxon>
        <taxon>Haplorrhini</taxon>
        <taxon>Catarrhini</taxon>
        <taxon>Hominidae</taxon>
        <taxon>Homo</taxon>
    </lineage>
</organism>
<accession>Q8TAS1</accession>
<accession>A0A0A6YYC2</accession>
<accession>A8K8K4</accession>
<accession>G3V1M1</accession>
<accession>Q96C22</accession>
<dbReference type="EC" id="2.7.11.1"/>
<dbReference type="EMBL" id="AJ536197">
    <property type="protein sequence ID" value="CAD60192.1"/>
    <property type="molecule type" value="mRNA"/>
</dbReference>
<dbReference type="EMBL" id="AK058195">
    <property type="status" value="NOT_ANNOTATED_CDS"/>
    <property type="molecule type" value="mRNA"/>
</dbReference>
<dbReference type="EMBL" id="AK292369">
    <property type="protein sequence ID" value="BAF85058.1"/>
    <property type="molecule type" value="mRNA"/>
</dbReference>
<dbReference type="EMBL" id="AL359699">
    <property type="status" value="NOT_ANNOTATED_CDS"/>
    <property type="molecule type" value="Genomic_DNA"/>
</dbReference>
<dbReference type="EMBL" id="CH471067">
    <property type="protein sequence ID" value="EAW90706.1"/>
    <property type="molecule type" value="Genomic_DNA"/>
</dbReference>
<dbReference type="EMBL" id="CH471067">
    <property type="protein sequence ID" value="EAW90707.1"/>
    <property type="molecule type" value="Genomic_DNA"/>
</dbReference>
<dbReference type="EMBL" id="BC014917">
    <property type="protein sequence ID" value="AAH14917.1"/>
    <property type="molecule type" value="mRNA"/>
</dbReference>
<dbReference type="EMBL" id="BC026046">
    <property type="protein sequence ID" value="AAH26046.1"/>
    <property type="molecule type" value="mRNA"/>
</dbReference>
<dbReference type="CCDS" id="CCDS1239.1">
    <molecule id="Q8TAS1-1"/>
</dbReference>
<dbReference type="CCDS" id="CCDS53423.1">
    <molecule id="Q8TAS1-3"/>
</dbReference>
<dbReference type="CCDS" id="CCDS53424.1">
    <molecule id="Q8TAS1-2"/>
</dbReference>
<dbReference type="RefSeq" id="NP_001171692.1">
    <molecule id="Q8TAS1-3"/>
    <property type="nucleotide sequence ID" value="NM_001184763.1"/>
</dbReference>
<dbReference type="RefSeq" id="NP_653225.2">
    <molecule id="Q8TAS1-2"/>
    <property type="nucleotide sequence ID" value="NM_144624.2"/>
</dbReference>
<dbReference type="RefSeq" id="NP_787062.1">
    <molecule id="Q8TAS1-1"/>
    <property type="nucleotide sequence ID" value="NM_175866.5"/>
</dbReference>
<dbReference type="SMR" id="Q8TAS1"/>
<dbReference type="BioGRID" id="126088">
    <property type="interactions" value="53"/>
</dbReference>
<dbReference type="FunCoup" id="Q8TAS1">
    <property type="interactions" value="1368"/>
</dbReference>
<dbReference type="IntAct" id="Q8TAS1">
    <property type="interactions" value="45"/>
</dbReference>
<dbReference type="STRING" id="9606.ENSP00000420270"/>
<dbReference type="GlyGen" id="Q8TAS1">
    <property type="glycosylation" value="1 site, 1 O-linked glycan (1 site)"/>
</dbReference>
<dbReference type="iPTMnet" id="Q8TAS1"/>
<dbReference type="PhosphoSitePlus" id="Q8TAS1"/>
<dbReference type="BioMuta" id="UHMK1"/>
<dbReference type="DMDM" id="24211880"/>
<dbReference type="jPOST" id="Q8TAS1"/>
<dbReference type="MassIVE" id="Q8TAS1"/>
<dbReference type="PaxDb" id="9606-ENSP00000420270"/>
<dbReference type="PeptideAtlas" id="Q8TAS1"/>
<dbReference type="ProteomicsDB" id="32376"/>
<dbReference type="ProteomicsDB" id="73913">
    <molecule id="Q8TAS1-1"/>
</dbReference>
<dbReference type="ProteomicsDB" id="73914">
    <molecule id="Q8TAS1-2"/>
</dbReference>
<dbReference type="Antibodypedia" id="34322">
    <property type="antibodies" value="337 antibodies from 29 providers"/>
</dbReference>
<dbReference type="DNASU" id="127933"/>
<dbReference type="Ensembl" id="ENST00000489294.2">
    <molecule id="Q8TAS1-1"/>
    <property type="protein sequence ID" value="ENSP00000420270.1"/>
    <property type="gene ID" value="ENSG00000152332.16"/>
</dbReference>
<dbReference type="Ensembl" id="ENST00000538489.5">
    <molecule id="Q8TAS1-2"/>
    <property type="protein sequence ID" value="ENSP00000446416.1"/>
    <property type="gene ID" value="ENSG00000152332.16"/>
</dbReference>
<dbReference type="Ensembl" id="ENST00000545294.5">
    <molecule id="Q8TAS1-3"/>
    <property type="protein sequence ID" value="ENSP00000441226.1"/>
    <property type="gene ID" value="ENSG00000152332.16"/>
</dbReference>
<dbReference type="GeneID" id="127933"/>
<dbReference type="KEGG" id="hsa:127933"/>
<dbReference type="MANE-Select" id="ENST00000489294.2">
    <property type="protein sequence ID" value="ENSP00000420270.1"/>
    <property type="RefSeq nucleotide sequence ID" value="NM_175866.5"/>
    <property type="RefSeq protein sequence ID" value="NP_787062.1"/>
</dbReference>
<dbReference type="UCSC" id="uc001gcc.3">
    <molecule id="Q8TAS1-1"/>
    <property type="organism name" value="human"/>
</dbReference>
<dbReference type="AGR" id="HGNC:19683"/>
<dbReference type="CTD" id="127933"/>
<dbReference type="DisGeNET" id="127933"/>
<dbReference type="GeneCards" id="UHMK1"/>
<dbReference type="HGNC" id="HGNC:19683">
    <property type="gene designation" value="UHMK1"/>
</dbReference>
<dbReference type="HPA" id="ENSG00000152332">
    <property type="expression patterns" value="Low tissue specificity"/>
</dbReference>
<dbReference type="MIM" id="608849">
    <property type="type" value="gene"/>
</dbReference>
<dbReference type="neXtProt" id="NX_Q8TAS1"/>
<dbReference type="OpenTargets" id="ENSG00000152332"/>
<dbReference type="PharmGKB" id="PA134974001"/>
<dbReference type="VEuPathDB" id="HostDB:ENSG00000152332"/>
<dbReference type="eggNOG" id="KOG0032">
    <property type="taxonomic scope" value="Eukaryota"/>
</dbReference>
<dbReference type="GeneTree" id="ENSGT00940000157769"/>
<dbReference type="HOGENOM" id="CLU_693633_0_0_1"/>
<dbReference type="InParanoid" id="Q8TAS1"/>
<dbReference type="OMA" id="VMATFYP"/>
<dbReference type="OrthoDB" id="10266058at2759"/>
<dbReference type="PAN-GO" id="Q8TAS1">
    <property type="GO annotations" value="7 GO annotations based on evolutionary models"/>
</dbReference>
<dbReference type="PhylomeDB" id="Q8TAS1"/>
<dbReference type="TreeFam" id="TF331856"/>
<dbReference type="PathwayCommons" id="Q8TAS1"/>
<dbReference type="Reactome" id="R-HSA-9634638">
    <property type="pathway name" value="Estrogen-dependent nuclear events downstream of ESR-membrane signaling"/>
</dbReference>
<dbReference type="SignaLink" id="Q8TAS1"/>
<dbReference type="SIGNOR" id="Q8TAS1"/>
<dbReference type="BioGRID-ORCS" id="127933">
    <property type="hits" value="18 hits in 1194 CRISPR screens"/>
</dbReference>
<dbReference type="ChiTaRS" id="UHMK1">
    <property type="organism name" value="human"/>
</dbReference>
<dbReference type="GeneWiki" id="UHMK1"/>
<dbReference type="GenomeRNAi" id="127933"/>
<dbReference type="Pharos" id="Q8TAS1">
    <property type="development level" value="Tbio"/>
</dbReference>
<dbReference type="PRO" id="PR:Q8TAS1"/>
<dbReference type="Proteomes" id="UP000005640">
    <property type="component" value="Chromosome 1"/>
</dbReference>
<dbReference type="RNAct" id="Q8TAS1">
    <property type="molecule type" value="protein"/>
</dbReference>
<dbReference type="Bgee" id="ENSG00000152332">
    <property type="expression patterns" value="Expressed in kidney epithelium and 195 other cell types or tissues"/>
</dbReference>
<dbReference type="GO" id="GO:0030424">
    <property type="term" value="C:axon"/>
    <property type="evidence" value="ECO:0000250"/>
    <property type="project" value="BHF-UCL"/>
</dbReference>
<dbReference type="GO" id="GO:0032839">
    <property type="term" value="C:dendrite cytoplasm"/>
    <property type="evidence" value="ECO:0000250"/>
    <property type="project" value="BHF-UCL"/>
</dbReference>
<dbReference type="GO" id="GO:0071598">
    <property type="term" value="C:neuronal ribonucleoprotein granule"/>
    <property type="evidence" value="ECO:0000250"/>
    <property type="project" value="BHF-UCL"/>
</dbReference>
<dbReference type="GO" id="GO:0005654">
    <property type="term" value="C:nucleoplasm"/>
    <property type="evidence" value="ECO:0000314"/>
    <property type="project" value="HPA"/>
</dbReference>
<dbReference type="GO" id="GO:0005634">
    <property type="term" value="C:nucleus"/>
    <property type="evidence" value="ECO:0000314"/>
    <property type="project" value="HGNC-UCL"/>
</dbReference>
<dbReference type="GO" id="GO:0005524">
    <property type="term" value="F:ATP binding"/>
    <property type="evidence" value="ECO:0000314"/>
    <property type="project" value="HGNC-UCL"/>
</dbReference>
<dbReference type="GO" id="GO:0106310">
    <property type="term" value="F:protein serine kinase activity"/>
    <property type="evidence" value="ECO:0007669"/>
    <property type="project" value="RHEA"/>
</dbReference>
<dbReference type="GO" id="GO:0004674">
    <property type="term" value="F:protein serine/threonine kinase activity"/>
    <property type="evidence" value="ECO:0000314"/>
    <property type="project" value="HGNC-UCL"/>
</dbReference>
<dbReference type="GO" id="GO:0043021">
    <property type="term" value="F:ribonucleoprotein complex binding"/>
    <property type="evidence" value="ECO:0000250"/>
    <property type="project" value="BHF-UCL"/>
</dbReference>
<dbReference type="GO" id="GO:0003723">
    <property type="term" value="F:RNA binding"/>
    <property type="evidence" value="ECO:0007669"/>
    <property type="project" value="UniProtKB-KW"/>
</dbReference>
<dbReference type="GO" id="GO:0031175">
    <property type="term" value="P:neuron projection development"/>
    <property type="evidence" value="ECO:0000250"/>
    <property type="project" value="BHF-UCL"/>
</dbReference>
<dbReference type="GO" id="GO:0018105">
    <property type="term" value="P:peptidyl-serine phosphorylation"/>
    <property type="evidence" value="ECO:0000250"/>
    <property type="project" value="UniProtKB"/>
</dbReference>
<dbReference type="GO" id="GO:0045948">
    <property type="term" value="P:positive regulation of translational initiation"/>
    <property type="evidence" value="ECO:0000250"/>
    <property type="project" value="BHF-UCL"/>
</dbReference>
<dbReference type="GO" id="GO:0051726">
    <property type="term" value="P:regulation of cell cycle"/>
    <property type="evidence" value="ECO:0000315"/>
    <property type="project" value="HGNC-UCL"/>
</dbReference>
<dbReference type="GO" id="GO:0046825">
    <property type="term" value="P:regulation of protein export from nucleus"/>
    <property type="evidence" value="ECO:0000314"/>
    <property type="project" value="HGNC-UCL"/>
</dbReference>
<dbReference type="CDD" id="cd14020">
    <property type="entry name" value="STKc_KIS"/>
    <property type="match status" value="1"/>
</dbReference>
<dbReference type="FunFam" id="1.10.510.10:FF:000322">
    <property type="entry name" value="Serine/threonine-protein kinase Kist isoform 1"/>
    <property type="match status" value="1"/>
</dbReference>
<dbReference type="FunFam" id="3.30.200.20:FF:000324">
    <property type="entry name" value="Serine/threonine-protein kinase Kist isoform 1"/>
    <property type="match status" value="1"/>
</dbReference>
<dbReference type="FunFam" id="3.30.70.330:FF:000241">
    <property type="entry name" value="Serine/threonine-protein kinase Kist isoform 1"/>
    <property type="match status" value="1"/>
</dbReference>
<dbReference type="Gene3D" id="3.30.70.330">
    <property type="match status" value="1"/>
</dbReference>
<dbReference type="Gene3D" id="3.30.200.20">
    <property type="entry name" value="Phosphorylase Kinase, domain 1"/>
    <property type="match status" value="1"/>
</dbReference>
<dbReference type="Gene3D" id="1.10.510.10">
    <property type="entry name" value="Transferase(Phosphotransferase) domain 1"/>
    <property type="match status" value="1"/>
</dbReference>
<dbReference type="InterPro" id="IPR011009">
    <property type="entry name" value="Kinase-like_dom_sf"/>
</dbReference>
<dbReference type="InterPro" id="IPR012677">
    <property type="entry name" value="Nucleotide-bd_a/b_plait_sf"/>
</dbReference>
<dbReference type="InterPro" id="IPR000719">
    <property type="entry name" value="Prot_kinase_dom"/>
</dbReference>
<dbReference type="InterPro" id="IPR035979">
    <property type="entry name" value="RBD_domain_sf"/>
</dbReference>
<dbReference type="InterPro" id="IPR000504">
    <property type="entry name" value="RRM_dom"/>
</dbReference>
<dbReference type="InterPro" id="IPR034372">
    <property type="entry name" value="UHMK1"/>
</dbReference>
<dbReference type="PANTHER" id="PTHR46962">
    <property type="entry name" value="SERINE/THREONINE-PROTEIN KINASE KIST"/>
    <property type="match status" value="1"/>
</dbReference>
<dbReference type="PANTHER" id="PTHR46962:SF1">
    <property type="entry name" value="SERINE_THREONINE-PROTEIN KINASE KIST"/>
    <property type="match status" value="1"/>
</dbReference>
<dbReference type="Pfam" id="PF00069">
    <property type="entry name" value="Pkinase"/>
    <property type="match status" value="1"/>
</dbReference>
<dbReference type="Pfam" id="PF00076">
    <property type="entry name" value="RRM_1"/>
    <property type="match status" value="1"/>
</dbReference>
<dbReference type="SMART" id="SM00360">
    <property type="entry name" value="RRM"/>
    <property type="match status" value="1"/>
</dbReference>
<dbReference type="SMART" id="SM00220">
    <property type="entry name" value="S_TKc"/>
    <property type="match status" value="1"/>
</dbReference>
<dbReference type="SUPFAM" id="SSF56112">
    <property type="entry name" value="Protein kinase-like (PK-like)"/>
    <property type="match status" value="1"/>
</dbReference>
<dbReference type="SUPFAM" id="SSF54928">
    <property type="entry name" value="RNA-binding domain, RBD"/>
    <property type="match status" value="1"/>
</dbReference>
<dbReference type="PROSITE" id="PS50011">
    <property type="entry name" value="PROTEIN_KINASE_DOM"/>
    <property type="match status" value="1"/>
</dbReference>
<dbReference type="PROSITE" id="PS50102">
    <property type="entry name" value="RRM"/>
    <property type="match status" value="1"/>
</dbReference>
<reference key="1">
    <citation type="journal article" date="2003" name="Brain Res. Mol. Brain Res.">
        <title>Quantitative RT-PCR reveals a ubiquitous but preferentially neural expression of the KIS gene in rat and human.</title>
        <authorList>
            <person name="Bieche I."/>
            <person name="Manceau V."/>
            <person name="Curmi P.A."/>
            <person name="Laurendeau I."/>
            <person name="Lachkar S."/>
            <person name="Leroy K."/>
            <person name="Vidaud D."/>
            <person name="Sobel A."/>
            <person name="Maucuer A."/>
        </authorList>
    </citation>
    <scope>NUCLEOTIDE SEQUENCE (ISOFORM 1)</scope>
</reference>
<reference key="2">
    <citation type="journal article" date="2004" name="Nat. Genet.">
        <title>Complete sequencing and characterization of 21,243 full-length human cDNAs.</title>
        <authorList>
            <person name="Ota T."/>
            <person name="Suzuki Y."/>
            <person name="Nishikawa T."/>
            <person name="Otsuki T."/>
            <person name="Sugiyama T."/>
            <person name="Irie R."/>
            <person name="Wakamatsu A."/>
            <person name="Hayashi K."/>
            <person name="Sato H."/>
            <person name="Nagai K."/>
            <person name="Kimura K."/>
            <person name="Makita H."/>
            <person name="Sekine M."/>
            <person name="Obayashi M."/>
            <person name="Nishi T."/>
            <person name="Shibahara T."/>
            <person name="Tanaka T."/>
            <person name="Ishii S."/>
            <person name="Yamamoto J."/>
            <person name="Saito K."/>
            <person name="Kawai Y."/>
            <person name="Isono Y."/>
            <person name="Nakamura Y."/>
            <person name="Nagahari K."/>
            <person name="Murakami K."/>
            <person name="Yasuda T."/>
            <person name="Iwayanagi T."/>
            <person name="Wagatsuma M."/>
            <person name="Shiratori A."/>
            <person name="Sudo H."/>
            <person name="Hosoiri T."/>
            <person name="Kaku Y."/>
            <person name="Kodaira H."/>
            <person name="Kondo H."/>
            <person name="Sugawara M."/>
            <person name="Takahashi M."/>
            <person name="Kanda K."/>
            <person name="Yokoi T."/>
            <person name="Furuya T."/>
            <person name="Kikkawa E."/>
            <person name="Omura Y."/>
            <person name="Abe K."/>
            <person name="Kamihara K."/>
            <person name="Katsuta N."/>
            <person name="Sato K."/>
            <person name="Tanikawa M."/>
            <person name="Yamazaki M."/>
            <person name="Ninomiya K."/>
            <person name="Ishibashi T."/>
            <person name="Yamashita H."/>
            <person name="Murakawa K."/>
            <person name="Fujimori K."/>
            <person name="Tanai H."/>
            <person name="Kimata M."/>
            <person name="Watanabe M."/>
            <person name="Hiraoka S."/>
            <person name="Chiba Y."/>
            <person name="Ishida S."/>
            <person name="Ono Y."/>
            <person name="Takiguchi S."/>
            <person name="Watanabe S."/>
            <person name="Yosida M."/>
            <person name="Hotuta T."/>
            <person name="Kusano J."/>
            <person name="Kanehori K."/>
            <person name="Takahashi-Fujii A."/>
            <person name="Hara H."/>
            <person name="Tanase T.-O."/>
            <person name="Nomura Y."/>
            <person name="Togiya S."/>
            <person name="Komai F."/>
            <person name="Hara R."/>
            <person name="Takeuchi K."/>
            <person name="Arita M."/>
            <person name="Imose N."/>
            <person name="Musashino K."/>
            <person name="Yuuki H."/>
            <person name="Oshima A."/>
            <person name="Sasaki N."/>
            <person name="Aotsuka S."/>
            <person name="Yoshikawa Y."/>
            <person name="Matsunawa H."/>
            <person name="Ichihara T."/>
            <person name="Shiohata N."/>
            <person name="Sano S."/>
            <person name="Moriya S."/>
            <person name="Momiyama H."/>
            <person name="Satoh N."/>
            <person name="Takami S."/>
            <person name="Terashima Y."/>
            <person name="Suzuki O."/>
            <person name="Nakagawa S."/>
            <person name="Senoh A."/>
            <person name="Mizoguchi H."/>
            <person name="Goto Y."/>
            <person name="Shimizu F."/>
            <person name="Wakebe H."/>
            <person name="Hishigaki H."/>
            <person name="Watanabe T."/>
            <person name="Sugiyama A."/>
            <person name="Takemoto M."/>
            <person name="Kawakami B."/>
            <person name="Yamazaki M."/>
            <person name="Watanabe K."/>
            <person name="Kumagai A."/>
            <person name="Itakura S."/>
            <person name="Fukuzumi Y."/>
            <person name="Fujimori Y."/>
            <person name="Komiyama M."/>
            <person name="Tashiro H."/>
            <person name="Tanigami A."/>
            <person name="Fujiwara T."/>
            <person name="Ono T."/>
            <person name="Yamada K."/>
            <person name="Fujii Y."/>
            <person name="Ozaki K."/>
            <person name="Hirao M."/>
            <person name="Ohmori Y."/>
            <person name="Kawabata A."/>
            <person name="Hikiji T."/>
            <person name="Kobatake N."/>
            <person name="Inagaki H."/>
            <person name="Ikema Y."/>
            <person name="Okamoto S."/>
            <person name="Okitani R."/>
            <person name="Kawakami T."/>
            <person name="Noguchi S."/>
            <person name="Itoh T."/>
            <person name="Shigeta K."/>
            <person name="Senba T."/>
            <person name="Matsumura K."/>
            <person name="Nakajima Y."/>
            <person name="Mizuno T."/>
            <person name="Morinaga M."/>
            <person name="Sasaki M."/>
            <person name="Togashi T."/>
            <person name="Oyama M."/>
            <person name="Hata H."/>
            <person name="Watanabe M."/>
            <person name="Komatsu T."/>
            <person name="Mizushima-Sugano J."/>
            <person name="Satoh T."/>
            <person name="Shirai Y."/>
            <person name="Takahashi Y."/>
            <person name="Nakagawa K."/>
            <person name="Okumura K."/>
            <person name="Nagase T."/>
            <person name="Nomura N."/>
            <person name="Kikuchi H."/>
            <person name="Masuho Y."/>
            <person name="Yamashita R."/>
            <person name="Nakai K."/>
            <person name="Yada T."/>
            <person name="Nakamura Y."/>
            <person name="Ohara O."/>
            <person name="Isogai T."/>
            <person name="Sugano S."/>
        </authorList>
    </citation>
    <scope>NUCLEOTIDE SEQUENCE [LARGE SCALE MRNA] (ISOFORMS 1 AND 3)</scope>
    <source>
        <tissue>Testis</tissue>
    </source>
</reference>
<reference key="3">
    <citation type="journal article" date="2006" name="Nature">
        <title>The DNA sequence and biological annotation of human chromosome 1.</title>
        <authorList>
            <person name="Gregory S.G."/>
            <person name="Barlow K.F."/>
            <person name="McLay K.E."/>
            <person name="Kaul R."/>
            <person name="Swarbreck D."/>
            <person name="Dunham A."/>
            <person name="Scott C.E."/>
            <person name="Howe K.L."/>
            <person name="Woodfine K."/>
            <person name="Spencer C.C.A."/>
            <person name="Jones M.C."/>
            <person name="Gillson C."/>
            <person name="Searle S."/>
            <person name="Zhou Y."/>
            <person name="Kokocinski F."/>
            <person name="McDonald L."/>
            <person name="Evans R."/>
            <person name="Phillips K."/>
            <person name="Atkinson A."/>
            <person name="Cooper R."/>
            <person name="Jones C."/>
            <person name="Hall R.E."/>
            <person name="Andrews T.D."/>
            <person name="Lloyd C."/>
            <person name="Ainscough R."/>
            <person name="Almeida J.P."/>
            <person name="Ambrose K.D."/>
            <person name="Anderson F."/>
            <person name="Andrew R.W."/>
            <person name="Ashwell R.I.S."/>
            <person name="Aubin K."/>
            <person name="Babbage A.K."/>
            <person name="Bagguley C.L."/>
            <person name="Bailey J."/>
            <person name="Beasley H."/>
            <person name="Bethel G."/>
            <person name="Bird C.P."/>
            <person name="Bray-Allen S."/>
            <person name="Brown J.Y."/>
            <person name="Brown A.J."/>
            <person name="Buckley D."/>
            <person name="Burton J."/>
            <person name="Bye J."/>
            <person name="Carder C."/>
            <person name="Chapman J.C."/>
            <person name="Clark S.Y."/>
            <person name="Clarke G."/>
            <person name="Clee C."/>
            <person name="Cobley V."/>
            <person name="Collier R.E."/>
            <person name="Corby N."/>
            <person name="Coville G.J."/>
            <person name="Davies J."/>
            <person name="Deadman R."/>
            <person name="Dunn M."/>
            <person name="Earthrowl M."/>
            <person name="Ellington A.G."/>
            <person name="Errington H."/>
            <person name="Frankish A."/>
            <person name="Frankland J."/>
            <person name="French L."/>
            <person name="Garner P."/>
            <person name="Garnett J."/>
            <person name="Gay L."/>
            <person name="Ghori M.R.J."/>
            <person name="Gibson R."/>
            <person name="Gilby L.M."/>
            <person name="Gillett W."/>
            <person name="Glithero R.J."/>
            <person name="Grafham D.V."/>
            <person name="Griffiths C."/>
            <person name="Griffiths-Jones S."/>
            <person name="Grocock R."/>
            <person name="Hammond S."/>
            <person name="Harrison E.S.I."/>
            <person name="Hart E."/>
            <person name="Haugen E."/>
            <person name="Heath P.D."/>
            <person name="Holmes S."/>
            <person name="Holt K."/>
            <person name="Howden P.J."/>
            <person name="Hunt A.R."/>
            <person name="Hunt S.E."/>
            <person name="Hunter G."/>
            <person name="Isherwood J."/>
            <person name="James R."/>
            <person name="Johnson C."/>
            <person name="Johnson D."/>
            <person name="Joy A."/>
            <person name="Kay M."/>
            <person name="Kershaw J.K."/>
            <person name="Kibukawa M."/>
            <person name="Kimberley A.M."/>
            <person name="King A."/>
            <person name="Knights A.J."/>
            <person name="Lad H."/>
            <person name="Laird G."/>
            <person name="Lawlor S."/>
            <person name="Leongamornlert D.A."/>
            <person name="Lloyd D.M."/>
            <person name="Loveland J."/>
            <person name="Lovell J."/>
            <person name="Lush M.J."/>
            <person name="Lyne R."/>
            <person name="Martin S."/>
            <person name="Mashreghi-Mohammadi M."/>
            <person name="Matthews L."/>
            <person name="Matthews N.S.W."/>
            <person name="McLaren S."/>
            <person name="Milne S."/>
            <person name="Mistry S."/>
            <person name="Moore M.J.F."/>
            <person name="Nickerson T."/>
            <person name="O'Dell C.N."/>
            <person name="Oliver K."/>
            <person name="Palmeiri A."/>
            <person name="Palmer S.A."/>
            <person name="Parker A."/>
            <person name="Patel D."/>
            <person name="Pearce A.V."/>
            <person name="Peck A.I."/>
            <person name="Pelan S."/>
            <person name="Phelps K."/>
            <person name="Phillimore B.J."/>
            <person name="Plumb R."/>
            <person name="Rajan J."/>
            <person name="Raymond C."/>
            <person name="Rouse G."/>
            <person name="Saenphimmachak C."/>
            <person name="Sehra H.K."/>
            <person name="Sheridan E."/>
            <person name="Shownkeen R."/>
            <person name="Sims S."/>
            <person name="Skuce C.D."/>
            <person name="Smith M."/>
            <person name="Steward C."/>
            <person name="Subramanian S."/>
            <person name="Sycamore N."/>
            <person name="Tracey A."/>
            <person name="Tromans A."/>
            <person name="Van Helmond Z."/>
            <person name="Wall M."/>
            <person name="Wallis J.M."/>
            <person name="White S."/>
            <person name="Whitehead S.L."/>
            <person name="Wilkinson J.E."/>
            <person name="Willey D.L."/>
            <person name="Williams H."/>
            <person name="Wilming L."/>
            <person name="Wray P.W."/>
            <person name="Wu Z."/>
            <person name="Coulson A."/>
            <person name="Vaudin M."/>
            <person name="Sulston J.E."/>
            <person name="Durbin R.M."/>
            <person name="Hubbard T."/>
            <person name="Wooster R."/>
            <person name="Dunham I."/>
            <person name="Carter N.P."/>
            <person name="McVean G."/>
            <person name="Ross M.T."/>
            <person name="Harrow J."/>
            <person name="Olson M.V."/>
            <person name="Beck S."/>
            <person name="Rogers J."/>
            <person name="Bentley D.R."/>
        </authorList>
    </citation>
    <scope>NUCLEOTIDE SEQUENCE [LARGE SCALE GENOMIC DNA]</scope>
</reference>
<reference key="4">
    <citation type="submission" date="2005-07" db="EMBL/GenBank/DDBJ databases">
        <authorList>
            <person name="Mural R.J."/>
            <person name="Istrail S."/>
            <person name="Sutton G.G."/>
            <person name="Florea L."/>
            <person name="Halpern A.L."/>
            <person name="Mobarry C.M."/>
            <person name="Lippert R."/>
            <person name="Walenz B."/>
            <person name="Shatkay H."/>
            <person name="Dew I."/>
            <person name="Miller J.R."/>
            <person name="Flanigan M.J."/>
            <person name="Edwards N.J."/>
            <person name="Bolanos R."/>
            <person name="Fasulo D."/>
            <person name="Halldorsson B.V."/>
            <person name="Hannenhalli S."/>
            <person name="Turner R."/>
            <person name="Yooseph S."/>
            <person name="Lu F."/>
            <person name="Nusskern D.R."/>
            <person name="Shue B.C."/>
            <person name="Zheng X.H."/>
            <person name="Zhong F."/>
            <person name="Delcher A.L."/>
            <person name="Huson D.H."/>
            <person name="Kravitz S.A."/>
            <person name="Mouchard L."/>
            <person name="Reinert K."/>
            <person name="Remington K.A."/>
            <person name="Clark A.G."/>
            <person name="Waterman M.S."/>
            <person name="Eichler E.E."/>
            <person name="Adams M.D."/>
            <person name="Hunkapiller M.W."/>
            <person name="Myers E.W."/>
            <person name="Venter J.C."/>
        </authorList>
    </citation>
    <scope>NUCLEOTIDE SEQUENCE [LARGE SCALE GENOMIC DNA]</scope>
</reference>
<reference key="5">
    <citation type="journal article" date="2004" name="Genome Res.">
        <title>The status, quality, and expansion of the NIH full-length cDNA project: the Mammalian Gene Collection (MGC).</title>
        <authorList>
            <consortium name="The MGC Project Team"/>
        </authorList>
    </citation>
    <scope>NUCLEOTIDE SEQUENCE [LARGE SCALE MRNA] (ISOFORMS 1 AND 2)</scope>
    <source>
        <tissue>Eye</tissue>
        <tissue>Skin</tissue>
    </source>
</reference>
<reference key="6">
    <citation type="journal article" date="1999" name="J. Biol. Chem.">
        <title>The novel kinase peptidylglycine alpha-amidating monooxygenase cytosolic interactor protein 2 interacts with the cytosolic routing determinants of the peptide processing enzyme peptidylglycine alpha-amidating monooxygenase.</title>
        <authorList>
            <person name="Caldwell B.D."/>
            <person name="Darlington D.N."/>
            <person name="Penzes P."/>
            <person name="Johnson R.C."/>
            <person name="Eipper B.A."/>
            <person name="Mains R.E."/>
        </authorList>
    </citation>
    <scope>INTERACTION WITH PAM</scope>
</reference>
<reference key="7">
    <citation type="journal article" date="2002" name="EMBO J.">
        <title>A growth factor-dependent nuclear kinase phosphorylates p27(Kip1) and regulates cell cycle progression.</title>
        <authorList>
            <person name="Boehm M."/>
            <person name="Yoshimoto T."/>
            <person name="Crook M.F."/>
            <person name="Nallamshetty S."/>
            <person name="True A."/>
            <person name="Nabel G.J."/>
            <person name="Nabel E.G."/>
        </authorList>
    </citation>
    <scope>INTERACTION WITH CDKN1B</scope>
    <scope>TISSUE SPECIFICITY</scope>
    <scope>MUTAGENESIS OF LYS-54</scope>
</reference>
<reference key="8">
    <citation type="journal article" date="2013" name="Biochim. Biophys. Acta">
        <title>The CATS (FAM64A) protein is a substrate of the kinase interacting stathmin (KIS).</title>
        <authorList>
            <person name="Archangelo L.F."/>
            <person name="Greif P.A."/>
            <person name="Maucuer A."/>
            <person name="Manceau V."/>
            <person name="Koneru N."/>
            <person name="Bigarella C.L."/>
            <person name="Niemann F."/>
            <person name="Dos Santos M.T."/>
            <person name="Kobarg J."/>
            <person name="Bohlander S.K."/>
            <person name="Saad S.T."/>
        </authorList>
    </citation>
    <scope>SUBCELLULAR LOCATION</scope>
    <scope>DEVELOPMENTAL STAGE</scope>
</reference>
<reference key="9">
    <citation type="journal article" date="2007" name="Nature">
        <title>Patterns of somatic mutation in human cancer genomes.</title>
        <authorList>
            <person name="Greenman C."/>
            <person name="Stephens P."/>
            <person name="Smith R."/>
            <person name="Dalgliesh G.L."/>
            <person name="Hunter C."/>
            <person name="Bignell G."/>
            <person name="Davies H."/>
            <person name="Teague J."/>
            <person name="Butler A."/>
            <person name="Stevens C."/>
            <person name="Edkins S."/>
            <person name="O'Meara S."/>
            <person name="Vastrik I."/>
            <person name="Schmidt E.E."/>
            <person name="Avis T."/>
            <person name="Barthorpe S."/>
            <person name="Bhamra G."/>
            <person name="Buck G."/>
            <person name="Choudhury B."/>
            <person name="Clements J."/>
            <person name="Cole J."/>
            <person name="Dicks E."/>
            <person name="Forbes S."/>
            <person name="Gray K."/>
            <person name="Halliday K."/>
            <person name="Harrison R."/>
            <person name="Hills K."/>
            <person name="Hinton J."/>
            <person name="Jenkinson A."/>
            <person name="Jones D."/>
            <person name="Menzies A."/>
            <person name="Mironenko T."/>
            <person name="Perry J."/>
            <person name="Raine K."/>
            <person name="Richardson D."/>
            <person name="Shepherd R."/>
            <person name="Small A."/>
            <person name="Tofts C."/>
            <person name="Varian J."/>
            <person name="Webb T."/>
            <person name="West S."/>
            <person name="Widaa S."/>
            <person name="Yates A."/>
            <person name="Cahill D.P."/>
            <person name="Louis D.N."/>
            <person name="Goldstraw P."/>
            <person name="Nicholson A.G."/>
            <person name="Brasseur F."/>
            <person name="Looijenga L."/>
            <person name="Weber B.L."/>
            <person name="Chiew Y.-E."/>
            <person name="DeFazio A."/>
            <person name="Greaves M.F."/>
            <person name="Green A.R."/>
            <person name="Campbell P."/>
            <person name="Birney E."/>
            <person name="Easton D.F."/>
            <person name="Chenevix-Trench G."/>
            <person name="Tan M.-H."/>
            <person name="Khoo S.K."/>
            <person name="Teh B.T."/>
            <person name="Yuen S.T."/>
            <person name="Leung S.Y."/>
            <person name="Wooster R."/>
            <person name="Futreal P.A."/>
            <person name="Stratton M.R."/>
        </authorList>
    </citation>
    <scope>VARIANTS [LARGE SCALE ANALYSIS] VAL-159 AND ASP-197</scope>
</reference>
<evidence type="ECO:0000250" key="1"/>
<evidence type="ECO:0000255" key="2">
    <source>
        <dbReference type="PROSITE-ProRule" id="PRU00159"/>
    </source>
</evidence>
<evidence type="ECO:0000255" key="3">
    <source>
        <dbReference type="PROSITE-ProRule" id="PRU00176"/>
    </source>
</evidence>
<evidence type="ECO:0000269" key="4">
    <source>
    </source>
</evidence>
<evidence type="ECO:0000269" key="5">
    <source>
    </source>
</evidence>
<evidence type="ECO:0000269" key="6">
    <source>
    </source>
</evidence>
<evidence type="ECO:0000269" key="7">
    <source>
    </source>
</evidence>
<evidence type="ECO:0000303" key="8">
    <source>
    </source>
</evidence>
<evidence type="ECO:0000303" key="9">
    <source>
    </source>
</evidence>
<evidence type="ECO:0000305" key="10"/>
<evidence type="ECO:0000312" key="11">
    <source>
        <dbReference type="EMBL" id="AAH26046.1"/>
    </source>
</evidence>
<name>UHMK1_HUMAN</name>
<protein>
    <recommendedName>
        <fullName>Serine/threonine-protein kinase Kist</fullName>
        <ecNumber>2.7.11.1</ecNumber>
    </recommendedName>
    <alternativeName>
        <fullName>Kinase interacting with stathmin</fullName>
    </alternativeName>
    <alternativeName>
        <fullName>PAM COOH-terminal interactor protein 2</fullName>
        <shortName>P-CIP2</shortName>
    </alternativeName>
    <alternativeName>
        <fullName>U2AF homology motif kinase 1</fullName>
    </alternativeName>
</protein>
<sequence>MAGSGCAWGAEPPRFLEAFGRLWQVQSRLGSGSSASVYRVRCCGNPGSPPGALKQFLPPGTTGAAASAAEYGFRKERAALEQLQGHRNIVTLYGVFTIHFSPNVPSRCLLLELLDVSVSELLLYSSHQGCSMWMIQHCARDVLEALAFLHHEGYVHADLKPRNILWSAENECFKLIDFGLSFKEGNQDVKYIQTDGYRAPEAELQNCLAQAGLQSDTECTSAVDLWSLGIILLEMFSGMKLKHTVRSQEWKANSSAIIDHIFASKAVVNAAIPAYHLRDLIKSMLHDDPSRRIPAEMALCSPFFSIPFAPHIEDLVMLPTPVLRLLNVLDDDYLENEEEYEDVVEDVKEECQKYGPVVSLLVPKENPGRGQVFVEYANAGDSKAAQKLLTGRMFDGKFVVATFYPLSAYKRGYLYQTLL</sequence>
<feature type="chain" id="PRO_0000086777" description="Serine/threonine-protein kinase Kist">
    <location>
        <begin position="1"/>
        <end position="419"/>
    </location>
</feature>
<feature type="domain" description="Protein kinase" evidence="2 10">
    <location>
        <begin position="23"/>
        <end position="304"/>
    </location>
</feature>
<feature type="domain" description="RRM" evidence="3 10">
    <location>
        <begin position="324"/>
        <end position="406"/>
    </location>
</feature>
<feature type="active site" description="Proton acceptor" evidence="2">
    <location>
        <position position="158"/>
    </location>
</feature>
<feature type="binding site" evidence="2">
    <location>
        <begin position="29"/>
        <end position="37"/>
    </location>
    <ligand>
        <name>ATP</name>
        <dbReference type="ChEBI" id="CHEBI:30616"/>
    </ligand>
</feature>
<feature type="binding site" evidence="2">
    <location>
        <position position="54"/>
    </location>
    <ligand>
        <name>ATP</name>
        <dbReference type="ChEBI" id="CHEBI:30616"/>
    </ligand>
</feature>
<feature type="splice variant" id="VSP_046145" description="In isoform 3." evidence="8">
    <original>MAGSGCAWGAEPPRFLEAFGRLWQVQSRLGSGSSASVYRVRCCGNPGSPPGALKQFLPPGTTGAAASAAEYGFRKERAALEQLQGHRNI</original>
    <variation>MFLTRPKVCVDLNRR</variation>
    <location>
        <begin position="1"/>
        <end position="89"/>
    </location>
</feature>
<feature type="splice variant" id="VSP_004908" description="In isoform 2." evidence="9">
    <original>DVV</original>
    <variation>GLC</variation>
    <location>
        <begin position="342"/>
        <end position="344"/>
    </location>
</feature>
<feature type="splice variant" id="VSP_004909" description="In isoform 2." evidence="9">
    <location>
        <begin position="345"/>
        <end position="419"/>
    </location>
</feature>
<feature type="sequence variant" id="VAR_041272" description="In dbSNP:rs34466082." evidence="6">
    <original>L</original>
    <variation>V</variation>
    <location>
        <position position="159"/>
    </location>
</feature>
<feature type="sequence variant" id="VAR_041273" description="In dbSNP:rs56201055." evidence="6">
    <original>Y</original>
    <variation>D</variation>
    <location>
        <position position="197"/>
    </location>
</feature>
<feature type="mutagenesis site" description="Loss of kinase activity." evidence="5">
    <original>K</original>
    <variation>A</variation>
    <location>
        <position position="54"/>
    </location>
</feature>
<gene>
    <name type="primary">UHMK1</name>
    <name type="synonym">KIS</name>
    <name type="synonym">KIST</name>
</gene>
<comment type="function">
    <text evidence="1">Upon serum stimulation, phosphorylates CDKN1B/p27Kip1, thus controlling CDKN1B subcellular location and cell cycle progression in G1 phase. May be involved in trafficking and/or processing of RNA (By similarity).</text>
</comment>
<comment type="catalytic activity">
    <reaction evidence="10">
        <text>L-seryl-[protein] + ATP = O-phospho-L-seryl-[protein] + ADP + H(+)</text>
        <dbReference type="Rhea" id="RHEA:17989"/>
        <dbReference type="Rhea" id="RHEA-COMP:9863"/>
        <dbReference type="Rhea" id="RHEA-COMP:11604"/>
        <dbReference type="ChEBI" id="CHEBI:15378"/>
        <dbReference type="ChEBI" id="CHEBI:29999"/>
        <dbReference type="ChEBI" id="CHEBI:30616"/>
        <dbReference type="ChEBI" id="CHEBI:83421"/>
        <dbReference type="ChEBI" id="CHEBI:456216"/>
        <dbReference type="EC" id="2.7.11.1"/>
    </reaction>
</comment>
<comment type="catalytic activity">
    <reaction evidence="10">
        <text>L-threonyl-[protein] + ATP = O-phospho-L-threonyl-[protein] + ADP + H(+)</text>
        <dbReference type="Rhea" id="RHEA:46608"/>
        <dbReference type="Rhea" id="RHEA-COMP:11060"/>
        <dbReference type="Rhea" id="RHEA-COMP:11605"/>
        <dbReference type="ChEBI" id="CHEBI:15378"/>
        <dbReference type="ChEBI" id="CHEBI:30013"/>
        <dbReference type="ChEBI" id="CHEBI:30616"/>
        <dbReference type="ChEBI" id="CHEBI:61977"/>
        <dbReference type="ChEBI" id="CHEBI:456216"/>
        <dbReference type="EC" id="2.7.11.1"/>
    </reaction>
</comment>
<comment type="subunit">
    <text evidence="1 4 5">Interacts with stathmin and CDKN1B/p27Kip1 (By similarity). Interacts with PAM.</text>
</comment>
<comment type="interaction">
    <interactant intactId="EBI-1753608">
        <id>Q8TAS1</id>
    </interactant>
    <interactant intactId="EBI-744603">
        <id>Q15637</id>
        <label>SF1</label>
    </interactant>
    <organismsDiffer>false</organismsDiffer>
    <experiments>4</experiments>
</comment>
<comment type="interaction">
    <interactant intactId="EBI-12157345">
        <id>Q8TAS1-2</id>
    </interactant>
    <interactant intactId="EBI-8643161">
        <id>Q9NX04</id>
        <label>AIRIM</label>
    </interactant>
    <organismsDiffer>false</organismsDiffer>
    <experiments>3</experiments>
</comment>
<comment type="interaction">
    <interactant intactId="EBI-12157345">
        <id>Q8TAS1-2</id>
    </interactant>
    <interactant intactId="EBI-8639312">
        <id>P25800</id>
        <label>LMO1</label>
    </interactant>
    <organismsDiffer>false</organismsDiffer>
    <experiments>3</experiments>
</comment>
<comment type="interaction">
    <interactant intactId="EBI-12157345">
        <id>Q8TAS1-2</id>
    </interactant>
    <interactant intactId="EBI-2114801">
        <id>Q9BU61</id>
        <label>NDUFAF3</label>
    </interactant>
    <organismsDiffer>false</organismsDiffer>
    <experiments>3</experiments>
</comment>
<comment type="interaction">
    <interactant intactId="EBI-12157345">
        <id>Q8TAS1-2</id>
    </interactant>
    <interactant intactId="EBI-12058229">
        <id>P57771-2</id>
        <label>RGS8</label>
    </interactant>
    <organismsDiffer>false</organismsDiffer>
    <experiments>3</experiments>
</comment>
<comment type="interaction">
    <interactant intactId="EBI-12157345">
        <id>Q8TAS1-2</id>
    </interactant>
    <interactant intactId="EBI-712598">
        <id>P62328</id>
        <label>TMSB4X</label>
    </interactant>
    <organismsDiffer>false</organismsDiffer>
    <experiments>3</experiments>
</comment>
<comment type="interaction">
    <interactant intactId="EBI-12157345">
        <id>Q8TAS1-2</id>
    </interactant>
    <interactant intactId="EBI-10241197">
        <id>Q3SY00</id>
        <label>TSGA10IP</label>
    </interactant>
    <organismsDiffer>false</organismsDiffer>
    <experiments>3</experiments>
</comment>
<comment type="subcellular location">
    <subcellularLocation>
        <location evidence="7">Nucleus</location>
    </subcellularLocation>
</comment>
<comment type="alternative products">
    <event type="alternative splicing"/>
    <isoform>
        <id>Q8TAS1-1</id>
        <name>1</name>
        <sequence type="displayed"/>
    </isoform>
    <isoform>
        <id>Q8TAS1-2</id>
        <name>2</name>
        <sequence type="described" ref="VSP_004908 VSP_004909"/>
    </isoform>
    <isoform>
        <id>Q8TAS1-3</id>
        <name>3</name>
        <sequence type="described" ref="VSP_046145"/>
    </isoform>
</comment>
<comment type="tissue specificity">
    <text evidence="5">Widely expressed, with highest levels in skeletal muscle, kidney, placenta and peripheral blood leukocytes.</text>
</comment>
<comment type="developmental stage">
    <text evidence="7">Regulated in a cell-cycle dependent manner, with lowest levels during S phase and highest at G1 phase (at protein level).</text>
</comment>
<comment type="similarity">
    <text evidence="2">Belongs to the protein kinase superfamily. Ser/Thr protein kinase family.</text>
</comment>
<proteinExistence type="evidence at protein level"/>